<name>ALR2_YEAST</name>
<keyword id="KW-1003">Cell membrane</keyword>
<keyword id="KW-0460">Magnesium</keyword>
<keyword id="KW-0472">Membrane</keyword>
<keyword id="KW-1185">Reference proteome</keyword>
<keyword id="KW-0812">Transmembrane</keyword>
<keyword id="KW-1133">Transmembrane helix</keyword>
<keyword id="KW-0813">Transport</keyword>
<protein>
    <recommendedName>
        <fullName>Magnesium transporter ALR2</fullName>
    </recommendedName>
    <alternativeName>
        <fullName>Aluminum resistance protein 2</fullName>
    </alternativeName>
</protein>
<proteinExistence type="evidence at protein level"/>
<feature type="chain" id="PRO_0000201536" description="Magnesium transporter ALR2">
    <location>
        <begin position="1"/>
        <end position="858"/>
    </location>
</feature>
<feature type="topological domain" description="Cytoplasmic" evidence="1">
    <location>
        <begin position="1"/>
        <end position="741"/>
    </location>
</feature>
<feature type="transmembrane region" description="Helical" evidence="1">
    <location>
        <begin position="742"/>
        <end position="762"/>
    </location>
</feature>
<feature type="topological domain" description="Extracellular" evidence="1">
    <location>
        <begin position="763"/>
        <end position="771"/>
    </location>
</feature>
<feature type="transmembrane region" description="Helical" evidence="1">
    <location>
        <begin position="772"/>
        <end position="792"/>
    </location>
</feature>
<feature type="topological domain" description="Cytoplasmic" evidence="1">
    <location>
        <begin position="793"/>
        <end position="858"/>
    </location>
</feature>
<feature type="region of interest" description="Disordered" evidence="2">
    <location>
        <begin position="1"/>
        <end position="81"/>
    </location>
</feature>
<feature type="region of interest" description="Disordered" evidence="2">
    <location>
        <begin position="318"/>
        <end position="337"/>
    </location>
</feature>
<feature type="region of interest" description="Disordered" evidence="2">
    <location>
        <begin position="365"/>
        <end position="396"/>
    </location>
</feature>
<feature type="compositionally biased region" description="Low complexity" evidence="2">
    <location>
        <begin position="1"/>
        <end position="14"/>
    </location>
</feature>
<feature type="compositionally biased region" description="Basic and acidic residues" evidence="2">
    <location>
        <begin position="46"/>
        <end position="61"/>
    </location>
</feature>
<feature type="compositionally biased region" description="Low complexity" evidence="2">
    <location>
        <begin position="67"/>
        <end position="81"/>
    </location>
</feature>
<feature type="compositionally biased region" description="Basic and acidic residues" evidence="2">
    <location>
        <begin position="367"/>
        <end position="379"/>
    </location>
</feature>
<feature type="compositionally biased region" description="Basic and acidic residues" evidence="2">
    <location>
        <begin position="386"/>
        <end position="395"/>
    </location>
</feature>
<reference key="1">
    <citation type="journal article" date="1995" name="Nat. Genet.">
        <title>Analysis of the nucleotide sequence of chromosome VI from Saccharomyces cerevisiae.</title>
        <authorList>
            <person name="Murakami Y."/>
            <person name="Naitou M."/>
            <person name="Hagiwara H."/>
            <person name="Shibata T."/>
            <person name="Ozawa M."/>
            <person name="Sasanuma S."/>
            <person name="Sasanuma M."/>
            <person name="Tsuchiya Y."/>
            <person name="Soeda E."/>
            <person name="Yokoyama K."/>
            <person name="Yamazaki M."/>
            <person name="Tashiro H."/>
            <person name="Eki T."/>
        </authorList>
    </citation>
    <scope>NUCLEOTIDE SEQUENCE [LARGE SCALE GENOMIC DNA]</scope>
    <source>
        <strain>ATCC 204508 / S288c</strain>
    </source>
</reference>
<reference key="2">
    <citation type="journal article" date="2014" name="G3 (Bethesda)">
        <title>The reference genome sequence of Saccharomyces cerevisiae: Then and now.</title>
        <authorList>
            <person name="Engel S.R."/>
            <person name="Dietrich F.S."/>
            <person name="Fisk D.G."/>
            <person name="Binkley G."/>
            <person name="Balakrishnan R."/>
            <person name="Costanzo M.C."/>
            <person name="Dwight S.S."/>
            <person name="Hitz B.C."/>
            <person name="Karra K."/>
            <person name="Nash R.S."/>
            <person name="Weng S."/>
            <person name="Wong E.D."/>
            <person name="Lloyd P."/>
            <person name="Skrzypek M.S."/>
            <person name="Miyasato S.R."/>
            <person name="Simison M."/>
            <person name="Cherry J.M."/>
        </authorList>
    </citation>
    <scope>GENOME REANNOTATION</scope>
    <source>
        <strain>ATCC 204508 / S288c</strain>
    </source>
</reference>
<reference key="3">
    <citation type="journal article" date="1998" name="J. Biol. Chem.">
        <title>Overexpression of the Saccharomyces cerevisiae magnesium transport system confers resistance to aluminum ion.</title>
        <authorList>
            <person name="MacDiarmid C.W."/>
            <person name="Gardner R.C."/>
        </authorList>
    </citation>
    <scope>FUNCTION</scope>
</reference>
<reference key="4">
    <citation type="journal article" date="2003" name="Nature">
        <title>Global analysis of protein expression in yeast.</title>
        <authorList>
            <person name="Ghaemmaghami S."/>
            <person name="Huh W.-K."/>
            <person name="Bower K."/>
            <person name="Howson R.W."/>
            <person name="Belle A."/>
            <person name="Dephoure N."/>
            <person name="O'Shea E.K."/>
            <person name="Weissman J.S."/>
        </authorList>
    </citation>
    <scope>LEVEL OF PROTEIN EXPRESSION [LARGE SCALE ANALYSIS]</scope>
</reference>
<reference key="5">
    <citation type="journal article" date="2006" name="Proc. Natl. Acad. Sci. U.S.A.">
        <title>A global topology map of the Saccharomyces cerevisiae membrane proteome.</title>
        <authorList>
            <person name="Kim H."/>
            <person name="Melen K."/>
            <person name="Oesterberg M."/>
            <person name="von Heijne G."/>
        </authorList>
    </citation>
    <scope>TOPOLOGY [LARGE SCALE ANALYSIS]</scope>
    <source>
        <strain>ATCC 208353 / W303-1A</strain>
    </source>
</reference>
<evidence type="ECO:0000255" key="1"/>
<evidence type="ECO:0000256" key="2">
    <source>
        <dbReference type="SAM" id="MobiDB-lite"/>
    </source>
</evidence>
<evidence type="ECO:0000269" key="3">
    <source>
    </source>
</evidence>
<evidence type="ECO:0000269" key="4">
    <source>
    </source>
</evidence>
<evidence type="ECO:0000305" key="5"/>
<evidence type="ECO:0000305" key="6">
    <source>
    </source>
</evidence>
<gene>
    <name type="primary">ALR2</name>
    <name type="ordered locus">YFL050C</name>
</gene>
<dbReference type="EMBL" id="D50617">
    <property type="protein sequence ID" value="BAA09191.1"/>
    <property type="molecule type" value="Genomic_DNA"/>
</dbReference>
<dbReference type="EMBL" id="BK006940">
    <property type="protein sequence ID" value="DAA12390.1"/>
    <property type="molecule type" value="Genomic_DNA"/>
</dbReference>
<dbReference type="PIR" id="S56205">
    <property type="entry name" value="S56205"/>
</dbReference>
<dbReference type="RefSeq" id="NP_116604.1">
    <property type="nucleotide sequence ID" value="NM_001179917.1"/>
</dbReference>
<dbReference type="SMR" id="P43553"/>
<dbReference type="BioGRID" id="31097">
    <property type="interactions" value="40"/>
</dbReference>
<dbReference type="DIP" id="DIP-4581N"/>
<dbReference type="FunCoup" id="P43553">
    <property type="interactions" value="28"/>
</dbReference>
<dbReference type="STRING" id="4932.YFL050C"/>
<dbReference type="iPTMnet" id="P43553"/>
<dbReference type="PaxDb" id="4932-YFL050C"/>
<dbReference type="PeptideAtlas" id="P43553"/>
<dbReference type="EnsemblFungi" id="YFL050C_mRNA">
    <property type="protein sequence ID" value="YFL050C"/>
    <property type="gene ID" value="YFL050C"/>
</dbReference>
<dbReference type="GeneID" id="850494"/>
<dbReference type="KEGG" id="sce:YFL050C"/>
<dbReference type="AGR" id="SGD:S000001844"/>
<dbReference type="SGD" id="S000001844">
    <property type="gene designation" value="ALR2"/>
</dbReference>
<dbReference type="VEuPathDB" id="FungiDB:YFL050C"/>
<dbReference type="eggNOG" id="ENOG502QPTQ">
    <property type="taxonomic scope" value="Eukaryota"/>
</dbReference>
<dbReference type="GeneTree" id="ENSGT00940000176664"/>
<dbReference type="HOGENOM" id="CLU_007127_6_0_1"/>
<dbReference type="InParanoid" id="P43553"/>
<dbReference type="OMA" id="VCFPMVP"/>
<dbReference type="OrthoDB" id="29879at2759"/>
<dbReference type="BioCyc" id="YEAST:G3O-30415-MONOMER"/>
<dbReference type="BRENDA" id="7.2.2.14">
    <property type="organism ID" value="984"/>
</dbReference>
<dbReference type="BioGRID-ORCS" id="850494">
    <property type="hits" value="5 hits in 10 CRISPR screens"/>
</dbReference>
<dbReference type="PRO" id="PR:P43553"/>
<dbReference type="Proteomes" id="UP000002311">
    <property type="component" value="Chromosome VI"/>
</dbReference>
<dbReference type="RNAct" id="P43553">
    <property type="molecule type" value="protein"/>
</dbReference>
<dbReference type="GO" id="GO:0071944">
    <property type="term" value="C:cell periphery"/>
    <property type="evidence" value="ECO:0007005"/>
    <property type="project" value="SGD"/>
</dbReference>
<dbReference type="GO" id="GO:0005886">
    <property type="term" value="C:plasma membrane"/>
    <property type="evidence" value="ECO:0000315"/>
    <property type="project" value="SGD"/>
</dbReference>
<dbReference type="GO" id="GO:0022890">
    <property type="term" value="F:inorganic cation transmembrane transporter activity"/>
    <property type="evidence" value="ECO:0000315"/>
    <property type="project" value="SGD"/>
</dbReference>
<dbReference type="GO" id="GO:0015095">
    <property type="term" value="F:magnesium ion transmembrane transporter activity"/>
    <property type="evidence" value="ECO:0000318"/>
    <property type="project" value="GO_Central"/>
</dbReference>
<dbReference type="GO" id="GO:0010961">
    <property type="term" value="P:intracellular magnesium ion homeostasis"/>
    <property type="evidence" value="ECO:0000318"/>
    <property type="project" value="GO_Central"/>
</dbReference>
<dbReference type="GO" id="GO:0015693">
    <property type="term" value="P:magnesium ion transport"/>
    <property type="evidence" value="ECO:0000314"/>
    <property type="project" value="SGD"/>
</dbReference>
<dbReference type="GO" id="GO:0006812">
    <property type="term" value="P:monoatomic cation transport"/>
    <property type="evidence" value="ECO:0000315"/>
    <property type="project" value="SGD"/>
</dbReference>
<dbReference type="GO" id="GO:0055085">
    <property type="term" value="P:transmembrane transport"/>
    <property type="evidence" value="ECO:0000315"/>
    <property type="project" value="SGD"/>
</dbReference>
<dbReference type="CDD" id="cd12829">
    <property type="entry name" value="Alr1p-like"/>
    <property type="match status" value="1"/>
</dbReference>
<dbReference type="FunFam" id="1.20.58.340:FF:000008">
    <property type="entry name" value="CorA family metal ion transporter"/>
    <property type="match status" value="1"/>
</dbReference>
<dbReference type="FunFam" id="3.30.460.20:FF:000003">
    <property type="entry name" value="Magnesium transporter ALR1"/>
    <property type="match status" value="1"/>
</dbReference>
<dbReference type="Gene3D" id="3.30.460.20">
    <property type="entry name" value="CorA soluble domain-like"/>
    <property type="match status" value="1"/>
</dbReference>
<dbReference type="Gene3D" id="1.20.58.340">
    <property type="entry name" value="Magnesium transport protein CorA, transmembrane region"/>
    <property type="match status" value="2"/>
</dbReference>
<dbReference type="InterPro" id="IPR044089">
    <property type="entry name" value="Alr1-like"/>
</dbReference>
<dbReference type="InterPro" id="IPR045861">
    <property type="entry name" value="CorA_cytoplasmic_dom"/>
</dbReference>
<dbReference type="InterPro" id="IPR045863">
    <property type="entry name" value="CorA_TM1_TM2"/>
</dbReference>
<dbReference type="InterPro" id="IPR002523">
    <property type="entry name" value="MgTranspt_CorA/ZnTranspt_ZntB"/>
</dbReference>
<dbReference type="PANTHER" id="PTHR21535">
    <property type="entry name" value="MAGNESIUM AND COBALT TRANSPORT PROTEIN/MITOCHONDRIAL IMPORT INNER MEMBRANE TRANSLOCASE SUBUNIT TIM8"/>
    <property type="match status" value="1"/>
</dbReference>
<dbReference type="PANTHER" id="PTHR21535:SF55">
    <property type="entry name" value="MAGNESIUM TRANSPORTER ALR1-RELATED"/>
    <property type="match status" value="1"/>
</dbReference>
<dbReference type="Pfam" id="PF01544">
    <property type="entry name" value="CorA"/>
    <property type="match status" value="2"/>
</dbReference>
<dbReference type="SUPFAM" id="SSF143865">
    <property type="entry name" value="CorA soluble domain-like"/>
    <property type="match status" value="1"/>
</dbReference>
<dbReference type="SUPFAM" id="SSF144083">
    <property type="entry name" value="Magnesium transport protein CorA, transmembrane region"/>
    <property type="match status" value="1"/>
</dbReference>
<comment type="function">
    <text evidence="4">Plasma membrane magnesium transporter.</text>
</comment>
<comment type="subcellular location">
    <subcellularLocation>
        <location evidence="6">Cell membrane</location>
        <topology evidence="5">Multi-pass membrane protein</topology>
    </subcellularLocation>
</comment>
<comment type="miscellaneous">
    <text evidence="3">Present with 2130 molecules/cell in log phase SD medium.</text>
</comment>
<comment type="similarity">
    <text evidence="5">Belongs to the CorA metal ion transporter (MIT) (TC 1.A.35) family.</text>
</comment>
<organism>
    <name type="scientific">Saccharomyces cerevisiae (strain ATCC 204508 / S288c)</name>
    <name type="common">Baker's yeast</name>
    <dbReference type="NCBI Taxonomy" id="559292"/>
    <lineage>
        <taxon>Eukaryota</taxon>
        <taxon>Fungi</taxon>
        <taxon>Dikarya</taxon>
        <taxon>Ascomycota</taxon>
        <taxon>Saccharomycotina</taxon>
        <taxon>Saccharomycetes</taxon>
        <taxon>Saccharomycetales</taxon>
        <taxon>Saccharomycetaceae</taxon>
        <taxon>Saccharomyces</taxon>
    </lineage>
</organism>
<accession>P43553</accession>
<accession>D6VTI0</accession>
<sequence>MSSLSTSFDSSSDLPRSKSVDNTAASMKTGKYPKLENYRQYSDAQPIRHEALALKVDETKDSRHKFSSSNGENSGVENGGYVEKTNISTSGRMDFEGEAEAEAVKRYQLRSFALLSSNARPSRLAKSETHQKQIHVESIAPSLPKNAALERGHDTALPAGTSSNRCNLEASSSARTFTSARKASLVSAIFETSAESEHGTHPKQAKLKRRTYSTISTHSSVNPTTLLTRTASQKSDMGNDTRRIKPLRMDSRVSFHSEISQASRDSQETEEDVCFPMFRLLHTRVNGVDFDELEEYAQISNAERNLSLANHQRHSERTYNHTDQDTGFTNSASTSGSSAALKYTPEISRTLEKNCSVNEMYVSENNESVREDDKPDLHPDVTFGRNKIEGEKEGNDSSYSRAYYTLQNTEYQIPSRFSFFRSESDETVHASDIPSLISEGQTFYELFKGGDPTWWLDCSCPTDDEMRCIAKTFGIHPLTAEDIRMQETREKVELFKSYYFVCFHTFENDKESENYLEPINVYIVVFRSGVLTFHFDPISHCANVRRRVRQLRDYVSVNSDWLCYALIDDITDSFAPVIQSIEYEADSIDDSVFMTRDMDFAAMLQRIGESRRKTMTLMRLLSGKADVIKMFAKRCQDETNGIGPVLKSQTNMVNLQAEQENVNQNNSNNQISLSNSYMQTTSQPRGDIALYLGDIQDHLLTMFQNLLAYEKIFSRSHANYLAQLQVESFNSNNKVTEMLGKVTMLGTMLVPLNVITGLFGMNVKVPGRNGSIAWWYGILGVLLLLAVISWFLASYWIKKIDPPATLNEAAGSGAKSVISSFLPKRDKRFNDDSKNGNARVGVRRKSTVSLPSRYSRYN</sequence>